<keyword id="KW-0002">3D-structure</keyword>
<keyword id="KW-0025">Alternative splicing</keyword>
<keyword id="KW-0131">Cell cycle</keyword>
<keyword id="KW-0227">DNA damage</keyword>
<keyword id="KW-0338">Growth arrest</keyword>
<keyword id="KW-0539">Nucleus</keyword>
<keyword id="KW-0597">Phosphoprotein</keyword>
<keyword id="KW-1267">Proteomics identification</keyword>
<keyword id="KW-1185">Reference proteome</keyword>
<accession>P24522</accession>
<accession>Q5TCA7</accession>
<accession>Q5TCA8</accession>
<protein>
    <recommendedName>
        <fullName>Growth arrest and DNA damage-inducible protein GADD45 alpha</fullName>
    </recommendedName>
    <alternativeName>
        <fullName>DNA damage-inducible transcript 1 protein</fullName>
        <shortName>DDIT-1</shortName>
    </alternativeName>
</protein>
<name>GA45A_HUMAN</name>
<feature type="chain" id="PRO_0000148331" description="Growth arrest and DNA damage-inducible protein GADD45 alpha">
    <location>
        <begin position="1"/>
        <end position="165"/>
    </location>
</feature>
<feature type="modified residue" description="Phosphothreonine" evidence="7">
    <location>
        <position position="2"/>
    </location>
</feature>
<feature type="splice variant" id="VSP_042523" description="In isoform 2." evidence="5">
    <original>RMDKVGDALEEVLSKALSQRTITVGVYEAAKLLNV</original>
    <variation>S</variation>
    <location>
        <begin position="15"/>
        <end position="49"/>
    </location>
</feature>
<feature type="mutagenesis site" description="Abolishes dimerization." evidence="3">
    <original>L</original>
    <variation>E</variation>
    <location>
        <position position="77"/>
    </location>
</feature>
<feature type="helix" evidence="8">
    <location>
        <begin position="16"/>
        <end position="33"/>
    </location>
</feature>
<feature type="strand" evidence="8">
    <location>
        <begin position="36"/>
        <end position="38"/>
    </location>
</feature>
<feature type="helix" evidence="8">
    <location>
        <begin position="40"/>
        <end position="42"/>
    </location>
</feature>
<feature type="helix" evidence="8">
    <location>
        <begin position="43"/>
        <end position="49"/>
    </location>
</feature>
<feature type="turn" evidence="8">
    <location>
        <begin position="51"/>
        <end position="53"/>
    </location>
</feature>
<feature type="strand" evidence="8">
    <location>
        <begin position="54"/>
        <end position="60"/>
    </location>
</feature>
<feature type="helix" evidence="8">
    <location>
        <begin position="64"/>
        <end position="67"/>
    </location>
</feature>
<feature type="helix" evidence="8">
    <location>
        <begin position="69"/>
        <end position="84"/>
    </location>
</feature>
<feature type="strand" evidence="8">
    <location>
        <begin position="89"/>
        <end position="93"/>
    </location>
</feature>
<feature type="helix" evidence="8">
    <location>
        <begin position="95"/>
        <end position="104"/>
    </location>
</feature>
<feature type="turn" evidence="8">
    <location>
        <begin position="105"/>
        <end position="107"/>
    </location>
</feature>
<feature type="strand" evidence="8">
    <location>
        <begin position="124"/>
        <end position="128"/>
    </location>
</feature>
<feature type="helix" evidence="8">
    <location>
        <begin position="138"/>
        <end position="151"/>
    </location>
</feature>
<feature type="turn" evidence="8">
    <location>
        <begin position="152"/>
        <end position="154"/>
    </location>
</feature>
<evidence type="ECO:0000250" key="1"/>
<evidence type="ECO:0000269" key="2">
    <source>
    </source>
</evidence>
<evidence type="ECO:0000269" key="3">
    <source>
    </source>
</evidence>
<evidence type="ECO:0000269" key="4">
    <source>
    </source>
</evidence>
<evidence type="ECO:0000303" key="5">
    <source>
    </source>
</evidence>
<evidence type="ECO:0000305" key="6"/>
<evidence type="ECO:0007744" key="7">
    <source>
    </source>
</evidence>
<evidence type="ECO:0007829" key="8">
    <source>
        <dbReference type="PDB" id="2KG4"/>
    </source>
</evidence>
<comment type="function">
    <text evidence="1">In T-cells, functions as a regulator of p38 MAPKs by inhibiting p88 phosphorylation and activity (By similarity). Might affect PCNA interaction with some CDK (cell division protein kinase) complexes; stimulates DNA excision repair in vitro and inhibits entry of cells into S phase.</text>
</comment>
<comment type="subunit">
    <text evidence="1 2 3 4">Interacts with MAPK14 (By similarity). Predominantly monomeric but also forms dimers and other oligomers as concentration increases. Interacts with GADD45GIP1. Interacts weakly with PCNA. Interacts with AURKA, likely to compete with dimerization.</text>
</comment>
<comment type="interaction">
    <interactant intactId="EBI-448167">
        <id>P24522</id>
    </interactant>
    <interactant intactId="EBI-3834328">
        <id>Q9GZX7</id>
        <label>AICDA</label>
    </interactant>
    <organismsDiffer>false</organismsDiffer>
    <experiments>5</experiments>
</comment>
<comment type="interaction">
    <interactant intactId="EBI-448167">
        <id>P24522</id>
    </interactant>
    <interactant intactId="EBI-12907584">
        <id>Q92600-3</id>
        <label>CNOT9</label>
    </interactant>
    <organismsDiffer>false</organismsDiffer>
    <experiments>5</experiments>
</comment>
<comment type="interaction">
    <interactant intactId="EBI-448167">
        <id>P24522</id>
    </interactant>
    <interactant intactId="EBI-715074">
        <id>Q13561</id>
        <label>DCTN2</label>
    </interactant>
    <organismsDiffer>false</organismsDiffer>
    <experiments>7</experiments>
</comment>
<comment type="interaction">
    <interactant intactId="EBI-448167">
        <id>P24522</id>
    </interactant>
    <interactant intactId="EBI-356015">
        <id>Q14204</id>
        <label>DYNC1H1</label>
    </interactant>
    <organismsDiffer>false</organismsDiffer>
    <experiments>3</experiments>
</comment>
<comment type="interaction">
    <interactant intactId="EBI-448167">
        <id>P24522</id>
    </interactant>
    <interactant intactId="EBI-765885">
        <id>P28715</id>
        <label>ERCC5</label>
    </interactant>
    <organismsDiffer>false</organismsDiffer>
    <experiments>2</experiments>
</comment>
<comment type="interaction">
    <interactant intactId="EBI-448167">
        <id>P24522</id>
    </interactant>
    <interactant intactId="EBI-372506">
        <id>Q8TAE8</id>
        <label>GADD45GIP1</label>
    </interactant>
    <organismsDiffer>false</organismsDiffer>
    <experiments>3</experiments>
</comment>
<comment type="interaction">
    <interactant intactId="EBI-448167">
        <id>P24522</id>
    </interactant>
    <interactant intactId="EBI-2432309">
        <id>Q92876</id>
        <label>KLK6</label>
    </interactant>
    <organismsDiffer>false</organismsDiffer>
    <experiments>3</experiments>
</comment>
<comment type="interaction">
    <interactant intactId="EBI-448167">
        <id>P24522</id>
    </interactant>
    <interactant intactId="EBI-2296670">
        <id>P80303</id>
        <label>NUCB2</label>
    </interactant>
    <organismsDiffer>false</organismsDiffer>
    <experiments>2</experiments>
</comment>
<comment type="interaction">
    <interactant intactId="EBI-448167">
        <id>P24522</id>
    </interactant>
    <interactant intactId="EBI-3921217">
        <id>Q9HBI0</id>
        <label>PARVG</label>
    </interactant>
    <organismsDiffer>false</organismsDiffer>
    <experiments>3</experiments>
</comment>
<comment type="interaction">
    <interactant intactId="EBI-448167">
        <id>P24522</id>
    </interactant>
    <interactant intactId="EBI-358311">
        <id>P12004</id>
        <label>PCNA</label>
    </interactant>
    <organismsDiffer>false</organismsDiffer>
    <experiments>3</experiments>
</comment>
<comment type="interaction">
    <interactant intactId="EBI-448167">
        <id>P24522</id>
    </interactant>
    <interactant intactId="EBI-2623095">
        <id>Q9Y371</id>
        <label>SH3GLB1</label>
    </interactant>
    <organismsDiffer>false</organismsDiffer>
    <experiments>2</experiments>
</comment>
<comment type="interaction">
    <interactant intactId="EBI-448167">
        <id>P24522</id>
    </interactant>
    <interactant intactId="EBI-348333">
        <id>Q13569</id>
        <label>TDG</label>
    </interactant>
    <organismsDiffer>false</organismsDiffer>
    <experiments>3</experiments>
</comment>
<comment type="interaction">
    <interactant intactId="EBI-448167">
        <id>P24522</id>
    </interactant>
    <interactant intactId="EBI-3835567">
        <id>Q9WVE0</id>
        <label>Aicda</label>
    </interactant>
    <organismsDiffer>true</organismsDiffer>
    <experiments>3</experiments>
</comment>
<comment type="subcellular location">
    <subcellularLocation>
        <location evidence="4">Nucleus</location>
    </subcellularLocation>
</comment>
<comment type="alternative products">
    <event type="alternative splicing"/>
    <isoform>
        <id>P24522-1</id>
        <name>1</name>
        <sequence type="displayed"/>
    </isoform>
    <isoform>
        <id>P24522-2</id>
        <name>2</name>
        <sequence type="described" ref="VSP_042523"/>
    </isoform>
</comment>
<comment type="induction">
    <text>By UV irradiation, X-rays, growth arrest and alkylating agents. The induction is mediated by some kinase(s) other than PKC.</text>
</comment>
<comment type="similarity">
    <text evidence="6">Belongs to the GADD45 family.</text>
</comment>
<comment type="online information" name="Wikipedia">
    <link uri="https://en.wikipedia.org/wiki/GADD45A"/>
    <text>GADD45A entry</text>
</comment>
<gene>
    <name type="primary">GADD45A</name>
    <name type="synonym">DDIT1</name>
    <name type="synonym">GADD45</name>
</gene>
<reference key="1">
    <citation type="journal article" date="1991" name="Mol. Cell. Biol.">
        <title>Induction by ionizing radiation of the gadd45 gene in cultured human cells: lack of mediation by protein kinase C.</title>
        <authorList>
            <person name="Papathanasiou M.A."/>
            <person name="Kerr N.C.K."/>
            <person name="Robbins J.H."/>
            <person name="McBride O.W."/>
            <person name="Alamo I. Jr."/>
            <person name="Barrett S.F."/>
            <person name="Hickson I.D."/>
            <person name="Fornace A.J. Jr."/>
        </authorList>
    </citation>
    <scope>NUCLEOTIDE SEQUENCE [MRNA] (ISOFORM 1)</scope>
</reference>
<reference key="2">
    <citation type="journal article" date="1993" name="J. Biol. Chem.">
        <title>Analysis of the mammalian gadd45 gene and its response to DNA damage.</title>
        <authorList>
            <person name="Hollander M.C."/>
            <person name="Alamo I. Jr."/>
            <person name="Jackman J."/>
            <person name="Wang M.G."/>
            <person name="McBride O.W."/>
            <person name="Fornace A.J. Jr."/>
        </authorList>
    </citation>
    <scope>NUCLEOTIDE SEQUENCE [GENOMIC DNA]</scope>
    <source>
        <tissue>Lung</tissue>
    </source>
</reference>
<reference key="3">
    <citation type="submission" date="2002-07" db="EMBL/GenBank/DDBJ databases">
        <authorList>
            <consortium name="NIEHS SNPs program"/>
        </authorList>
    </citation>
    <scope>NUCLEOTIDE SEQUENCE [GENOMIC DNA]</scope>
</reference>
<reference key="4">
    <citation type="journal article" date="2006" name="Nucleic Acids Res.">
        <title>Nucleolin links to arsenic-induced stabilization of GADD45alpha mRNA.</title>
        <authorList>
            <person name="Zhang Y."/>
            <person name="Bhatia D."/>
            <person name="Xia H."/>
            <person name="Castranova V."/>
            <person name="Shi X."/>
            <person name="Chen F."/>
        </authorList>
    </citation>
    <scope>NUCLEOTIDE SEQUENCE [MRNA] (ISOFORM 2)</scope>
    <source>
        <tissue>Bronchiolar epithelial cell</tissue>
    </source>
</reference>
<reference key="5">
    <citation type="journal article" date="2004" name="Nat. Genet.">
        <title>Complete sequencing and characterization of 21,243 full-length human cDNAs.</title>
        <authorList>
            <person name="Ota T."/>
            <person name="Suzuki Y."/>
            <person name="Nishikawa T."/>
            <person name="Otsuki T."/>
            <person name="Sugiyama T."/>
            <person name="Irie R."/>
            <person name="Wakamatsu A."/>
            <person name="Hayashi K."/>
            <person name="Sato H."/>
            <person name="Nagai K."/>
            <person name="Kimura K."/>
            <person name="Makita H."/>
            <person name="Sekine M."/>
            <person name="Obayashi M."/>
            <person name="Nishi T."/>
            <person name="Shibahara T."/>
            <person name="Tanaka T."/>
            <person name="Ishii S."/>
            <person name="Yamamoto J."/>
            <person name="Saito K."/>
            <person name="Kawai Y."/>
            <person name="Isono Y."/>
            <person name="Nakamura Y."/>
            <person name="Nagahari K."/>
            <person name="Murakami K."/>
            <person name="Yasuda T."/>
            <person name="Iwayanagi T."/>
            <person name="Wagatsuma M."/>
            <person name="Shiratori A."/>
            <person name="Sudo H."/>
            <person name="Hosoiri T."/>
            <person name="Kaku Y."/>
            <person name="Kodaira H."/>
            <person name="Kondo H."/>
            <person name="Sugawara M."/>
            <person name="Takahashi M."/>
            <person name="Kanda K."/>
            <person name="Yokoi T."/>
            <person name="Furuya T."/>
            <person name="Kikkawa E."/>
            <person name="Omura Y."/>
            <person name="Abe K."/>
            <person name="Kamihara K."/>
            <person name="Katsuta N."/>
            <person name="Sato K."/>
            <person name="Tanikawa M."/>
            <person name="Yamazaki M."/>
            <person name="Ninomiya K."/>
            <person name="Ishibashi T."/>
            <person name="Yamashita H."/>
            <person name="Murakawa K."/>
            <person name="Fujimori K."/>
            <person name="Tanai H."/>
            <person name="Kimata M."/>
            <person name="Watanabe M."/>
            <person name="Hiraoka S."/>
            <person name="Chiba Y."/>
            <person name="Ishida S."/>
            <person name="Ono Y."/>
            <person name="Takiguchi S."/>
            <person name="Watanabe S."/>
            <person name="Yosida M."/>
            <person name="Hotuta T."/>
            <person name="Kusano J."/>
            <person name="Kanehori K."/>
            <person name="Takahashi-Fujii A."/>
            <person name="Hara H."/>
            <person name="Tanase T.-O."/>
            <person name="Nomura Y."/>
            <person name="Togiya S."/>
            <person name="Komai F."/>
            <person name="Hara R."/>
            <person name="Takeuchi K."/>
            <person name="Arita M."/>
            <person name="Imose N."/>
            <person name="Musashino K."/>
            <person name="Yuuki H."/>
            <person name="Oshima A."/>
            <person name="Sasaki N."/>
            <person name="Aotsuka S."/>
            <person name="Yoshikawa Y."/>
            <person name="Matsunawa H."/>
            <person name="Ichihara T."/>
            <person name="Shiohata N."/>
            <person name="Sano S."/>
            <person name="Moriya S."/>
            <person name="Momiyama H."/>
            <person name="Satoh N."/>
            <person name="Takami S."/>
            <person name="Terashima Y."/>
            <person name="Suzuki O."/>
            <person name="Nakagawa S."/>
            <person name="Senoh A."/>
            <person name="Mizoguchi H."/>
            <person name="Goto Y."/>
            <person name="Shimizu F."/>
            <person name="Wakebe H."/>
            <person name="Hishigaki H."/>
            <person name="Watanabe T."/>
            <person name="Sugiyama A."/>
            <person name="Takemoto M."/>
            <person name="Kawakami B."/>
            <person name="Yamazaki M."/>
            <person name="Watanabe K."/>
            <person name="Kumagai A."/>
            <person name="Itakura S."/>
            <person name="Fukuzumi Y."/>
            <person name="Fujimori Y."/>
            <person name="Komiyama M."/>
            <person name="Tashiro H."/>
            <person name="Tanigami A."/>
            <person name="Fujiwara T."/>
            <person name="Ono T."/>
            <person name="Yamada K."/>
            <person name="Fujii Y."/>
            <person name="Ozaki K."/>
            <person name="Hirao M."/>
            <person name="Ohmori Y."/>
            <person name="Kawabata A."/>
            <person name="Hikiji T."/>
            <person name="Kobatake N."/>
            <person name="Inagaki H."/>
            <person name="Ikema Y."/>
            <person name="Okamoto S."/>
            <person name="Okitani R."/>
            <person name="Kawakami T."/>
            <person name="Noguchi S."/>
            <person name="Itoh T."/>
            <person name="Shigeta K."/>
            <person name="Senba T."/>
            <person name="Matsumura K."/>
            <person name="Nakajima Y."/>
            <person name="Mizuno T."/>
            <person name="Morinaga M."/>
            <person name="Sasaki M."/>
            <person name="Togashi T."/>
            <person name="Oyama M."/>
            <person name="Hata H."/>
            <person name="Watanabe M."/>
            <person name="Komatsu T."/>
            <person name="Mizushima-Sugano J."/>
            <person name="Satoh T."/>
            <person name="Shirai Y."/>
            <person name="Takahashi Y."/>
            <person name="Nakagawa K."/>
            <person name="Okumura K."/>
            <person name="Nagase T."/>
            <person name="Nomura N."/>
            <person name="Kikuchi H."/>
            <person name="Masuho Y."/>
            <person name="Yamashita R."/>
            <person name="Nakai K."/>
            <person name="Yada T."/>
            <person name="Nakamura Y."/>
            <person name="Ohara O."/>
            <person name="Isogai T."/>
            <person name="Sugano S."/>
        </authorList>
    </citation>
    <scope>NUCLEOTIDE SEQUENCE [LARGE SCALE MRNA] (ISOFORM 1)</scope>
    <source>
        <tissue>Uterus</tissue>
    </source>
</reference>
<reference key="6">
    <citation type="journal article" date="2006" name="Nature">
        <title>The DNA sequence and biological annotation of human chromosome 1.</title>
        <authorList>
            <person name="Gregory S.G."/>
            <person name="Barlow K.F."/>
            <person name="McLay K.E."/>
            <person name="Kaul R."/>
            <person name="Swarbreck D."/>
            <person name="Dunham A."/>
            <person name="Scott C.E."/>
            <person name="Howe K.L."/>
            <person name="Woodfine K."/>
            <person name="Spencer C.C.A."/>
            <person name="Jones M.C."/>
            <person name="Gillson C."/>
            <person name="Searle S."/>
            <person name="Zhou Y."/>
            <person name="Kokocinski F."/>
            <person name="McDonald L."/>
            <person name="Evans R."/>
            <person name="Phillips K."/>
            <person name="Atkinson A."/>
            <person name="Cooper R."/>
            <person name="Jones C."/>
            <person name="Hall R.E."/>
            <person name="Andrews T.D."/>
            <person name="Lloyd C."/>
            <person name="Ainscough R."/>
            <person name="Almeida J.P."/>
            <person name="Ambrose K.D."/>
            <person name="Anderson F."/>
            <person name="Andrew R.W."/>
            <person name="Ashwell R.I.S."/>
            <person name="Aubin K."/>
            <person name="Babbage A.K."/>
            <person name="Bagguley C.L."/>
            <person name="Bailey J."/>
            <person name="Beasley H."/>
            <person name="Bethel G."/>
            <person name="Bird C.P."/>
            <person name="Bray-Allen S."/>
            <person name="Brown J.Y."/>
            <person name="Brown A.J."/>
            <person name="Buckley D."/>
            <person name="Burton J."/>
            <person name="Bye J."/>
            <person name="Carder C."/>
            <person name="Chapman J.C."/>
            <person name="Clark S.Y."/>
            <person name="Clarke G."/>
            <person name="Clee C."/>
            <person name="Cobley V."/>
            <person name="Collier R.E."/>
            <person name="Corby N."/>
            <person name="Coville G.J."/>
            <person name="Davies J."/>
            <person name="Deadman R."/>
            <person name="Dunn M."/>
            <person name="Earthrowl M."/>
            <person name="Ellington A.G."/>
            <person name="Errington H."/>
            <person name="Frankish A."/>
            <person name="Frankland J."/>
            <person name="French L."/>
            <person name="Garner P."/>
            <person name="Garnett J."/>
            <person name="Gay L."/>
            <person name="Ghori M.R.J."/>
            <person name="Gibson R."/>
            <person name="Gilby L.M."/>
            <person name="Gillett W."/>
            <person name="Glithero R.J."/>
            <person name="Grafham D.V."/>
            <person name="Griffiths C."/>
            <person name="Griffiths-Jones S."/>
            <person name="Grocock R."/>
            <person name="Hammond S."/>
            <person name="Harrison E.S.I."/>
            <person name="Hart E."/>
            <person name="Haugen E."/>
            <person name="Heath P.D."/>
            <person name="Holmes S."/>
            <person name="Holt K."/>
            <person name="Howden P.J."/>
            <person name="Hunt A.R."/>
            <person name="Hunt S.E."/>
            <person name="Hunter G."/>
            <person name="Isherwood J."/>
            <person name="James R."/>
            <person name="Johnson C."/>
            <person name="Johnson D."/>
            <person name="Joy A."/>
            <person name="Kay M."/>
            <person name="Kershaw J.K."/>
            <person name="Kibukawa M."/>
            <person name="Kimberley A.M."/>
            <person name="King A."/>
            <person name="Knights A.J."/>
            <person name="Lad H."/>
            <person name="Laird G."/>
            <person name="Lawlor S."/>
            <person name="Leongamornlert D.A."/>
            <person name="Lloyd D.M."/>
            <person name="Loveland J."/>
            <person name="Lovell J."/>
            <person name="Lush M.J."/>
            <person name="Lyne R."/>
            <person name="Martin S."/>
            <person name="Mashreghi-Mohammadi M."/>
            <person name="Matthews L."/>
            <person name="Matthews N.S.W."/>
            <person name="McLaren S."/>
            <person name="Milne S."/>
            <person name="Mistry S."/>
            <person name="Moore M.J.F."/>
            <person name="Nickerson T."/>
            <person name="O'Dell C.N."/>
            <person name="Oliver K."/>
            <person name="Palmeiri A."/>
            <person name="Palmer S.A."/>
            <person name="Parker A."/>
            <person name="Patel D."/>
            <person name="Pearce A.V."/>
            <person name="Peck A.I."/>
            <person name="Pelan S."/>
            <person name="Phelps K."/>
            <person name="Phillimore B.J."/>
            <person name="Plumb R."/>
            <person name="Rajan J."/>
            <person name="Raymond C."/>
            <person name="Rouse G."/>
            <person name="Saenphimmachak C."/>
            <person name="Sehra H.K."/>
            <person name="Sheridan E."/>
            <person name="Shownkeen R."/>
            <person name="Sims S."/>
            <person name="Skuce C.D."/>
            <person name="Smith M."/>
            <person name="Steward C."/>
            <person name="Subramanian S."/>
            <person name="Sycamore N."/>
            <person name="Tracey A."/>
            <person name="Tromans A."/>
            <person name="Van Helmond Z."/>
            <person name="Wall M."/>
            <person name="Wallis J.M."/>
            <person name="White S."/>
            <person name="Whitehead S.L."/>
            <person name="Wilkinson J.E."/>
            <person name="Willey D.L."/>
            <person name="Williams H."/>
            <person name="Wilming L."/>
            <person name="Wray P.W."/>
            <person name="Wu Z."/>
            <person name="Coulson A."/>
            <person name="Vaudin M."/>
            <person name="Sulston J.E."/>
            <person name="Durbin R.M."/>
            <person name="Hubbard T."/>
            <person name="Wooster R."/>
            <person name="Dunham I."/>
            <person name="Carter N.P."/>
            <person name="McVean G."/>
            <person name="Ross M.T."/>
            <person name="Harrow J."/>
            <person name="Olson M.V."/>
            <person name="Beck S."/>
            <person name="Rogers J."/>
            <person name="Bentley D.R."/>
        </authorList>
    </citation>
    <scope>NUCLEOTIDE SEQUENCE [LARGE SCALE GENOMIC DNA]</scope>
</reference>
<reference key="7">
    <citation type="submission" date="2005-09" db="EMBL/GenBank/DDBJ databases">
        <authorList>
            <person name="Mural R.J."/>
            <person name="Istrail S."/>
            <person name="Sutton G."/>
            <person name="Florea L."/>
            <person name="Halpern A.L."/>
            <person name="Mobarry C.M."/>
            <person name="Lippert R."/>
            <person name="Walenz B."/>
            <person name="Shatkay H."/>
            <person name="Dew I."/>
            <person name="Miller J.R."/>
            <person name="Flanigan M.J."/>
            <person name="Edwards N.J."/>
            <person name="Bolanos R."/>
            <person name="Fasulo D."/>
            <person name="Halldorsson B.V."/>
            <person name="Hannenhalli S."/>
            <person name="Turner R."/>
            <person name="Yooseph S."/>
            <person name="Lu F."/>
            <person name="Nusskern D.R."/>
            <person name="Shue B.C."/>
            <person name="Zheng X.H."/>
            <person name="Zhong F."/>
            <person name="Delcher A.L."/>
            <person name="Huson D.H."/>
            <person name="Kravitz S.A."/>
            <person name="Mouchard L."/>
            <person name="Reinert K."/>
            <person name="Remington K.A."/>
            <person name="Clark A.G."/>
            <person name="Waterman M.S."/>
            <person name="Eichler E.E."/>
            <person name="Adams M.D."/>
            <person name="Hunkapiller M.W."/>
            <person name="Myers E.W."/>
            <person name="Venter J.C."/>
        </authorList>
    </citation>
    <scope>NUCLEOTIDE SEQUENCE [LARGE SCALE GENOMIC DNA]</scope>
</reference>
<reference key="8">
    <citation type="journal article" date="2004" name="Genome Res.">
        <title>The status, quality, and expansion of the NIH full-length cDNA project: the Mammalian Gene Collection (MGC).</title>
        <authorList>
            <consortium name="The MGC Project Team"/>
        </authorList>
    </citation>
    <scope>NUCLEOTIDE SEQUENCE [LARGE SCALE MRNA] (ISOFORM 1)</scope>
    <source>
        <tissue>Muscle</tissue>
    </source>
</reference>
<reference key="9">
    <citation type="journal article" date="2003" name="J. Biol. Chem.">
        <title>CR6-interacting factor 1 interacts with Gadd45 family proteins and modulates the cell cycle.</title>
        <authorList>
            <person name="Chung H.K."/>
            <person name="Yi Y.-W."/>
            <person name="Jung N.-C."/>
            <person name="Kim D."/>
            <person name="Suh J.M."/>
            <person name="Kim H."/>
            <person name="Park K.C."/>
            <person name="Song J.H."/>
            <person name="Kim D.W."/>
            <person name="Hwang E.S."/>
            <person name="Yoon S.-H."/>
            <person name="Bae Y.-S."/>
            <person name="Kim J.M."/>
            <person name="Bae I."/>
            <person name="Shong M."/>
        </authorList>
    </citation>
    <scope>INTERACTION WITH GADD45GIP1</scope>
    <source>
        <tissue>Colon carcinoma</tissue>
    </source>
</reference>
<reference key="10">
    <citation type="journal article" date="1994" name="Science">
        <title>Interaction of the p53-regulated protein Gadd45 with proliferating cell nuclear antigen.</title>
        <authorList>
            <person name="Smith M.L."/>
            <person name="Chen I.-T."/>
            <person name="Zhan Q."/>
            <person name="Bae I."/>
            <person name="Chen C.-Y."/>
            <person name="Gilmer T.M."/>
            <person name="Kastan M.B."/>
            <person name="O'Connor P.M."/>
            <person name="Fornace A.J. Jr."/>
        </authorList>
    </citation>
    <scope>SUBCELLULAR LOCATION</scope>
    <scope>INTERACTION WITH PCNA</scope>
</reference>
<reference key="11">
    <citation type="journal article" date="2013" name="J. Proteome Res.">
        <title>Toward a comprehensive characterization of a human cancer cell phosphoproteome.</title>
        <authorList>
            <person name="Zhou H."/>
            <person name="Di Palma S."/>
            <person name="Preisinger C."/>
            <person name="Peng M."/>
            <person name="Polat A.N."/>
            <person name="Heck A.J."/>
            <person name="Mohammed S."/>
        </authorList>
    </citation>
    <scope>PHOSPHORYLATION [LARGE SCALE ANALYSIS] AT THR-2</scope>
    <scope>IDENTIFICATION BY MASS SPECTROMETRY [LARGE SCALE ANALYSIS]</scope>
    <source>
        <tissue>Erythroleukemia</tissue>
    </source>
</reference>
<reference key="12">
    <citation type="journal article" date="2010" name="J. Biol. Chem.">
        <title>Solution structure of human growth arrest and DNA damage 45alpha (Gadd45alpha) and its interactions with proliferating cell nuclear antigen (PCNA) and Aurora A kinase.</title>
        <authorList>
            <person name="Sanchez R."/>
            <person name="Pantoja-Uceda D."/>
            <person name="Prieto J."/>
            <person name="Diercks T."/>
            <person name="Marcaida M.J."/>
            <person name="Montoya G."/>
            <person name="Campos-Olivas R."/>
            <person name="Blanco F.J."/>
        </authorList>
    </citation>
    <scope>STRUCTURE BY NMR</scope>
    <scope>SUBUNIT</scope>
    <scope>INTERACTION WITH PCNA AND AURKA</scope>
    <scope>MUTAGENESIS OF LEU-77</scope>
</reference>
<sequence length="165" mass="18336">MTLEEFSAGEQKTERMDKVGDALEEVLSKALSQRTITVGVYEAAKLLNVDPDNVVLCLLAADEDDDRDVALQIHFTLIQAFCCENDINILRVSNPGRLAELLLLETDAGPAASEGAEQPPDLHCVLVTNPHSSQWKDPALSQLICFCRESRYMDQWVPVINLPER</sequence>
<dbReference type="EMBL" id="L24498">
    <property type="protein sequence ID" value="AAA72045.1"/>
    <property type="molecule type" value="Genomic_DNA"/>
</dbReference>
<dbReference type="EMBL" id="M60974">
    <property type="protein sequence ID" value="AAA35863.1"/>
    <property type="molecule type" value="mRNA"/>
</dbReference>
<dbReference type="EMBL" id="AY135686">
    <property type="protein sequence ID" value="AAM88884.1"/>
    <property type="molecule type" value="Genomic_DNA"/>
</dbReference>
<dbReference type="EMBL" id="DQ008445">
    <property type="protein sequence ID" value="AAY25021.1"/>
    <property type="molecule type" value="mRNA"/>
</dbReference>
<dbReference type="EMBL" id="AK314991">
    <property type="protein sequence ID" value="BAG37487.1"/>
    <property type="molecule type" value="mRNA"/>
</dbReference>
<dbReference type="EMBL" id="AL136120">
    <property type="status" value="NOT_ANNOTATED_CDS"/>
    <property type="molecule type" value="Genomic_DNA"/>
</dbReference>
<dbReference type="EMBL" id="CH471059">
    <property type="protein sequence ID" value="EAX06487.1"/>
    <property type="molecule type" value="Genomic_DNA"/>
</dbReference>
<dbReference type="EMBL" id="CH471059">
    <property type="protein sequence ID" value="EAX06488.1"/>
    <property type="molecule type" value="Genomic_DNA"/>
</dbReference>
<dbReference type="EMBL" id="BC011757">
    <property type="protein sequence ID" value="AAH11757.1"/>
    <property type="molecule type" value="mRNA"/>
</dbReference>
<dbReference type="CCDS" id="CCDS55605.1">
    <molecule id="P24522-2"/>
</dbReference>
<dbReference type="CCDS" id="CCDS640.1">
    <molecule id="P24522-1"/>
</dbReference>
<dbReference type="PIR" id="A39617">
    <property type="entry name" value="A39617"/>
</dbReference>
<dbReference type="RefSeq" id="NP_001186670.1">
    <molecule id="P24522-2"/>
    <property type="nucleotide sequence ID" value="NM_001199741.2"/>
</dbReference>
<dbReference type="RefSeq" id="NP_001186671.1">
    <property type="nucleotide sequence ID" value="NM_001199742.1"/>
</dbReference>
<dbReference type="RefSeq" id="NP_001915.1">
    <molecule id="P24522-1"/>
    <property type="nucleotide sequence ID" value="NM_001924.4"/>
</dbReference>
<dbReference type="PDB" id="2KG4">
    <property type="method" value="NMR"/>
    <property type="chains" value="A=1-165"/>
</dbReference>
<dbReference type="PDBsum" id="2KG4"/>
<dbReference type="BMRB" id="P24522"/>
<dbReference type="SMR" id="P24522"/>
<dbReference type="BioGRID" id="108014">
    <property type="interactions" value="104"/>
</dbReference>
<dbReference type="CORUM" id="P24522"/>
<dbReference type="DIP" id="DIP-24217N"/>
<dbReference type="FunCoup" id="P24522">
    <property type="interactions" value="3140"/>
</dbReference>
<dbReference type="IntAct" id="P24522">
    <property type="interactions" value="77"/>
</dbReference>
<dbReference type="MINT" id="P24522"/>
<dbReference type="STRING" id="9606.ENSP00000360025"/>
<dbReference type="iPTMnet" id="P24522"/>
<dbReference type="PhosphoSitePlus" id="P24522"/>
<dbReference type="BioMuta" id="GADD45A"/>
<dbReference type="DMDM" id="120751"/>
<dbReference type="MassIVE" id="P24522"/>
<dbReference type="PaxDb" id="9606-ENSP00000360025"/>
<dbReference type="PeptideAtlas" id="P24522"/>
<dbReference type="ProteomicsDB" id="54209">
    <molecule id="P24522-1"/>
</dbReference>
<dbReference type="Pumba" id="P24522"/>
<dbReference type="Antibodypedia" id="33411">
    <property type="antibodies" value="419 antibodies from 34 providers"/>
</dbReference>
<dbReference type="DNASU" id="1647"/>
<dbReference type="Ensembl" id="ENST00000370985.4">
    <molecule id="P24522-2"/>
    <property type="protein sequence ID" value="ENSP00000360024.3"/>
    <property type="gene ID" value="ENSG00000116717.13"/>
</dbReference>
<dbReference type="Ensembl" id="ENST00000370986.9">
    <molecule id="P24522-1"/>
    <property type="protein sequence ID" value="ENSP00000360025.4"/>
    <property type="gene ID" value="ENSG00000116717.13"/>
</dbReference>
<dbReference type="GeneID" id="1647"/>
<dbReference type="KEGG" id="hsa:1647"/>
<dbReference type="MANE-Select" id="ENST00000370986.9">
    <property type="protein sequence ID" value="ENSP00000360025.4"/>
    <property type="RefSeq nucleotide sequence ID" value="NM_001924.4"/>
    <property type="RefSeq protein sequence ID" value="NP_001915.1"/>
</dbReference>
<dbReference type="UCSC" id="uc001ddz.3">
    <molecule id="P24522-1"/>
    <property type="organism name" value="human"/>
</dbReference>
<dbReference type="AGR" id="HGNC:4095"/>
<dbReference type="CTD" id="1647"/>
<dbReference type="DisGeNET" id="1647"/>
<dbReference type="GeneCards" id="GADD45A"/>
<dbReference type="HGNC" id="HGNC:4095">
    <property type="gene designation" value="GADD45A"/>
</dbReference>
<dbReference type="HPA" id="ENSG00000116717">
    <property type="expression patterns" value="Tissue enhanced (skeletal)"/>
</dbReference>
<dbReference type="MIM" id="126335">
    <property type="type" value="gene"/>
</dbReference>
<dbReference type="neXtProt" id="NX_P24522"/>
<dbReference type="OpenTargets" id="ENSG00000116717"/>
<dbReference type="PharmGKB" id="PA28510"/>
<dbReference type="VEuPathDB" id="HostDB:ENSG00000116717"/>
<dbReference type="eggNOG" id="ENOG502RY8P">
    <property type="taxonomic scope" value="Eukaryota"/>
</dbReference>
<dbReference type="GeneTree" id="ENSGT00950000182964"/>
<dbReference type="HOGENOM" id="CLU_118164_0_0_1"/>
<dbReference type="InParanoid" id="P24522"/>
<dbReference type="OMA" id="FRMTFEE"/>
<dbReference type="OrthoDB" id="5976967at2759"/>
<dbReference type="PAN-GO" id="P24522">
    <property type="GO annotations" value="3 GO annotations based on evolutionary models"/>
</dbReference>
<dbReference type="PhylomeDB" id="P24522"/>
<dbReference type="TreeFam" id="TF300196"/>
<dbReference type="PathwayCommons" id="P24522"/>
<dbReference type="Reactome" id="R-HSA-6804114">
    <property type="pathway name" value="TP53 Regulates Transcription of Genes Involved in G2 Cell Cycle Arrest"/>
</dbReference>
<dbReference type="Reactome" id="R-HSA-9617828">
    <property type="pathway name" value="FOXO-mediated transcription of cell cycle genes"/>
</dbReference>
<dbReference type="SignaLink" id="P24522"/>
<dbReference type="SIGNOR" id="P24522"/>
<dbReference type="BioGRID-ORCS" id="1647">
    <property type="hits" value="19 hits in 1171 CRISPR screens"/>
</dbReference>
<dbReference type="ChiTaRS" id="GADD45A">
    <property type="organism name" value="human"/>
</dbReference>
<dbReference type="EvolutionaryTrace" id="P24522"/>
<dbReference type="GeneWiki" id="GADD45A"/>
<dbReference type="GenomeRNAi" id="1647"/>
<dbReference type="Pharos" id="P24522">
    <property type="development level" value="Tbio"/>
</dbReference>
<dbReference type="PRO" id="PR:P24522"/>
<dbReference type="Proteomes" id="UP000005640">
    <property type="component" value="Chromosome 1"/>
</dbReference>
<dbReference type="RNAct" id="P24522">
    <property type="molecule type" value="protein"/>
</dbReference>
<dbReference type="Bgee" id="ENSG00000116717">
    <property type="expression patterns" value="Expressed in descending thoracic aorta and 202 other cell types or tissues"/>
</dbReference>
<dbReference type="ExpressionAtlas" id="P24522">
    <property type="expression patterns" value="baseline and differential"/>
</dbReference>
<dbReference type="GO" id="GO:0005737">
    <property type="term" value="C:cytoplasm"/>
    <property type="evidence" value="ECO:0000314"/>
    <property type="project" value="UniProtKB"/>
</dbReference>
<dbReference type="GO" id="GO:0016607">
    <property type="term" value="C:nuclear speck"/>
    <property type="evidence" value="ECO:0000314"/>
    <property type="project" value="HPA"/>
</dbReference>
<dbReference type="GO" id="GO:0005654">
    <property type="term" value="C:nucleoplasm"/>
    <property type="evidence" value="ECO:0000304"/>
    <property type="project" value="Reactome"/>
</dbReference>
<dbReference type="GO" id="GO:0005634">
    <property type="term" value="C:nucleus"/>
    <property type="evidence" value="ECO:0000314"/>
    <property type="project" value="UniProtKB"/>
</dbReference>
<dbReference type="GO" id="GO:0019900">
    <property type="term" value="F:kinase binding"/>
    <property type="evidence" value="ECO:0000353"/>
    <property type="project" value="CAFA"/>
</dbReference>
<dbReference type="GO" id="GO:1990841">
    <property type="term" value="F:promoter-specific chromatin binding"/>
    <property type="evidence" value="ECO:0007669"/>
    <property type="project" value="Ensembl"/>
</dbReference>
<dbReference type="GO" id="GO:0046982">
    <property type="term" value="F:protein heterodimerization activity"/>
    <property type="evidence" value="ECO:0000353"/>
    <property type="project" value="CAFA"/>
</dbReference>
<dbReference type="GO" id="GO:0042803">
    <property type="term" value="F:protein homodimerization activity"/>
    <property type="evidence" value="ECO:0000314"/>
    <property type="project" value="CAFA"/>
</dbReference>
<dbReference type="GO" id="GO:0006915">
    <property type="term" value="P:apoptotic process"/>
    <property type="evidence" value="ECO:0000304"/>
    <property type="project" value="ProtInc"/>
</dbReference>
<dbReference type="GO" id="GO:0071479">
    <property type="term" value="P:cellular response to ionizing radiation"/>
    <property type="evidence" value="ECO:0000315"/>
    <property type="project" value="BHF-UCL"/>
</dbReference>
<dbReference type="GO" id="GO:0071260">
    <property type="term" value="P:cellular response to mechanical stimulus"/>
    <property type="evidence" value="ECO:0000270"/>
    <property type="project" value="UniProtKB"/>
</dbReference>
<dbReference type="GO" id="GO:0007098">
    <property type="term" value="P:centrosome cycle"/>
    <property type="evidence" value="ECO:0007669"/>
    <property type="project" value="Ensembl"/>
</dbReference>
<dbReference type="GO" id="GO:0006281">
    <property type="term" value="P:DNA repair"/>
    <property type="evidence" value="ECO:0000304"/>
    <property type="project" value="ProtInc"/>
</dbReference>
<dbReference type="GO" id="GO:0016525">
    <property type="term" value="P:negative regulation of angiogenesis"/>
    <property type="evidence" value="ECO:0007669"/>
    <property type="project" value="Ensembl"/>
</dbReference>
<dbReference type="GO" id="GO:0043537">
    <property type="term" value="P:negative regulation of blood vessel endothelial cell migration"/>
    <property type="evidence" value="ECO:0000315"/>
    <property type="project" value="CACAO"/>
</dbReference>
<dbReference type="GO" id="GO:0033140">
    <property type="term" value="P:negative regulation of peptidyl-serine phosphorylation of STAT protein"/>
    <property type="evidence" value="ECO:0000315"/>
    <property type="project" value="CACAO"/>
</dbReference>
<dbReference type="GO" id="GO:0071901">
    <property type="term" value="P:negative regulation of protein serine/threonine kinase activity"/>
    <property type="evidence" value="ECO:0000315"/>
    <property type="project" value="CACAO"/>
</dbReference>
<dbReference type="GO" id="GO:0000122">
    <property type="term" value="P:negative regulation of transcription by RNA polymerase II"/>
    <property type="evidence" value="ECO:0000315"/>
    <property type="project" value="CACAO"/>
</dbReference>
<dbReference type="GO" id="GO:0043065">
    <property type="term" value="P:positive regulation of apoptotic process"/>
    <property type="evidence" value="ECO:0000314"/>
    <property type="project" value="UniProtKB"/>
</dbReference>
<dbReference type="GO" id="GO:0046330">
    <property type="term" value="P:positive regulation of JNK cascade"/>
    <property type="evidence" value="ECO:0000314"/>
    <property type="project" value="UniProtKB"/>
</dbReference>
<dbReference type="GO" id="GO:1900745">
    <property type="term" value="P:positive regulation of p38MAPK cascade"/>
    <property type="evidence" value="ECO:0000314"/>
    <property type="project" value="UniProtKB"/>
</dbReference>
<dbReference type="GO" id="GO:2000379">
    <property type="term" value="P:positive regulation of reactive oxygen species metabolic process"/>
    <property type="evidence" value="ECO:0000315"/>
    <property type="project" value="BHF-UCL"/>
</dbReference>
<dbReference type="GO" id="GO:0051726">
    <property type="term" value="P:regulation of cell cycle"/>
    <property type="evidence" value="ECO:0000318"/>
    <property type="project" value="GO_Central"/>
</dbReference>
<dbReference type="GO" id="GO:0000079">
    <property type="term" value="P:regulation of cyclin-dependent protein serine/threonine kinase activity"/>
    <property type="evidence" value="ECO:0000304"/>
    <property type="project" value="ProtInc"/>
</dbReference>
<dbReference type="GO" id="GO:0042770">
    <property type="term" value="P:signal transduction in response to DNA damage"/>
    <property type="evidence" value="ECO:0000315"/>
    <property type="project" value="BHF-UCL"/>
</dbReference>
<dbReference type="DisProt" id="DP00704"/>
<dbReference type="FunFam" id="3.30.1330.30:FF:000012">
    <property type="entry name" value="growth arrest and DNA damage-inducible protein GADD45 alpha"/>
    <property type="match status" value="1"/>
</dbReference>
<dbReference type="Gene3D" id="3.30.1330.30">
    <property type="match status" value="1"/>
</dbReference>
<dbReference type="InterPro" id="IPR024824">
    <property type="entry name" value="GADD45"/>
</dbReference>
<dbReference type="InterPro" id="IPR029064">
    <property type="entry name" value="Ribosomal_eL30-like_sf"/>
</dbReference>
<dbReference type="InterPro" id="IPR004038">
    <property type="entry name" value="Ribosomal_eL8/eL30/eS12/Gad45"/>
</dbReference>
<dbReference type="PANTHER" id="PTHR10411">
    <property type="entry name" value="GROWTH ARREST AND DNA DAMAGE-INDUCIBLE PROTEIN GADD45"/>
    <property type="match status" value="1"/>
</dbReference>
<dbReference type="PANTHER" id="PTHR10411:SF3">
    <property type="entry name" value="GROWTH ARREST AND DNA DAMAGE-INDUCIBLE PROTEIN GADD45 ALPHA"/>
    <property type="match status" value="1"/>
</dbReference>
<dbReference type="Pfam" id="PF01248">
    <property type="entry name" value="Ribosomal_L7Ae"/>
    <property type="match status" value="1"/>
</dbReference>
<dbReference type="SUPFAM" id="SSF55315">
    <property type="entry name" value="L30e-like"/>
    <property type="match status" value="1"/>
</dbReference>
<organism>
    <name type="scientific">Homo sapiens</name>
    <name type="common">Human</name>
    <dbReference type="NCBI Taxonomy" id="9606"/>
    <lineage>
        <taxon>Eukaryota</taxon>
        <taxon>Metazoa</taxon>
        <taxon>Chordata</taxon>
        <taxon>Craniata</taxon>
        <taxon>Vertebrata</taxon>
        <taxon>Euteleostomi</taxon>
        <taxon>Mammalia</taxon>
        <taxon>Eutheria</taxon>
        <taxon>Euarchontoglires</taxon>
        <taxon>Primates</taxon>
        <taxon>Haplorrhini</taxon>
        <taxon>Catarrhini</taxon>
        <taxon>Hominidae</taxon>
        <taxon>Homo</taxon>
    </lineage>
</organism>
<proteinExistence type="evidence at protein level"/>